<name>MDTL_ECOHS</name>
<reference key="1">
    <citation type="journal article" date="2008" name="J. Bacteriol.">
        <title>The pangenome structure of Escherichia coli: comparative genomic analysis of E. coli commensal and pathogenic isolates.</title>
        <authorList>
            <person name="Rasko D.A."/>
            <person name="Rosovitz M.J."/>
            <person name="Myers G.S.A."/>
            <person name="Mongodin E.F."/>
            <person name="Fricke W.F."/>
            <person name="Gajer P."/>
            <person name="Crabtree J."/>
            <person name="Sebaihia M."/>
            <person name="Thomson N.R."/>
            <person name="Chaudhuri R."/>
            <person name="Henderson I.R."/>
            <person name="Sperandio V."/>
            <person name="Ravel J."/>
        </authorList>
    </citation>
    <scope>NUCLEOTIDE SEQUENCE [LARGE SCALE GENOMIC DNA]</scope>
    <source>
        <strain>HS</strain>
    </source>
</reference>
<organism>
    <name type="scientific">Escherichia coli O9:H4 (strain HS)</name>
    <dbReference type="NCBI Taxonomy" id="331112"/>
    <lineage>
        <taxon>Bacteria</taxon>
        <taxon>Pseudomonadati</taxon>
        <taxon>Pseudomonadota</taxon>
        <taxon>Gammaproteobacteria</taxon>
        <taxon>Enterobacterales</taxon>
        <taxon>Enterobacteriaceae</taxon>
        <taxon>Escherichia</taxon>
    </lineage>
</organism>
<gene>
    <name evidence="1" type="primary">mdtL</name>
    <name type="ordered locus">EcHS_A3924</name>
</gene>
<dbReference type="EMBL" id="CP000802">
    <property type="protein sequence ID" value="ABV08126.1"/>
    <property type="molecule type" value="Genomic_DNA"/>
</dbReference>
<dbReference type="RefSeq" id="WP_000085987.1">
    <property type="nucleotide sequence ID" value="NC_009800.1"/>
</dbReference>
<dbReference type="SMR" id="A8A6H2"/>
<dbReference type="GeneID" id="93778451"/>
<dbReference type="KEGG" id="ecx:EcHS_A3924"/>
<dbReference type="HOGENOM" id="CLU_001265_47_1_6"/>
<dbReference type="GO" id="GO:0005886">
    <property type="term" value="C:plasma membrane"/>
    <property type="evidence" value="ECO:0007669"/>
    <property type="project" value="UniProtKB-SubCell"/>
</dbReference>
<dbReference type="GO" id="GO:0022857">
    <property type="term" value="F:transmembrane transporter activity"/>
    <property type="evidence" value="ECO:0007669"/>
    <property type="project" value="UniProtKB-UniRule"/>
</dbReference>
<dbReference type="GO" id="GO:0046677">
    <property type="term" value="P:response to antibiotic"/>
    <property type="evidence" value="ECO:0007669"/>
    <property type="project" value="UniProtKB-KW"/>
</dbReference>
<dbReference type="CDD" id="cd17320">
    <property type="entry name" value="MFS_MdfA_MDR_like"/>
    <property type="match status" value="1"/>
</dbReference>
<dbReference type="FunFam" id="1.20.1720.10:FF:000003">
    <property type="entry name" value="Multidrug resistance protein MdtL"/>
    <property type="match status" value="1"/>
</dbReference>
<dbReference type="Gene3D" id="1.20.1720.10">
    <property type="entry name" value="Multidrug resistance protein D"/>
    <property type="match status" value="1"/>
</dbReference>
<dbReference type="HAMAP" id="MF_01530">
    <property type="entry name" value="MFS_MdtL"/>
    <property type="match status" value="1"/>
</dbReference>
<dbReference type="InterPro" id="IPR011701">
    <property type="entry name" value="MFS"/>
</dbReference>
<dbReference type="InterPro" id="IPR020846">
    <property type="entry name" value="MFS_dom"/>
</dbReference>
<dbReference type="InterPro" id="IPR050189">
    <property type="entry name" value="MFS_Efflux_Transporters"/>
</dbReference>
<dbReference type="InterPro" id="IPR036259">
    <property type="entry name" value="MFS_trans_sf"/>
</dbReference>
<dbReference type="InterPro" id="IPR023697">
    <property type="entry name" value="Multidrug-R_MdtL"/>
</dbReference>
<dbReference type="NCBIfam" id="NF007782">
    <property type="entry name" value="PRK10473.1"/>
    <property type="match status" value="1"/>
</dbReference>
<dbReference type="PANTHER" id="PTHR43124:SF3">
    <property type="entry name" value="CHLORAMPHENICOL EFFLUX PUMP RV0191"/>
    <property type="match status" value="1"/>
</dbReference>
<dbReference type="PANTHER" id="PTHR43124">
    <property type="entry name" value="PURINE EFFLUX PUMP PBUE"/>
    <property type="match status" value="1"/>
</dbReference>
<dbReference type="Pfam" id="PF07690">
    <property type="entry name" value="MFS_1"/>
    <property type="match status" value="1"/>
</dbReference>
<dbReference type="SUPFAM" id="SSF103473">
    <property type="entry name" value="MFS general substrate transporter"/>
    <property type="match status" value="1"/>
</dbReference>
<dbReference type="PROSITE" id="PS50850">
    <property type="entry name" value="MFS"/>
    <property type="match status" value="1"/>
</dbReference>
<accession>A8A6H2</accession>
<sequence length="391" mass="41506">MSRFLICSFALVLLYPAGIDMYLVGLPRIAADLNASEAQLHIAFSVYLAGMAAAMLFAGKVADRSGRKPVAIPGAALFIIASVFCSLAETSTLFLAGRFLQGLGAGCCYVVAFAILRDTLDDRRRAKVLSLLNGITCIIPVLAPVLGHLIMLKFPWQSLFWAMAMMGIAVLMLSLFILKETRPASPAASDKPRENSESLLNRFFLSRVVITTLSVSVILTFVNTSPVLLMEIMGFERGEYATIMALTAGVSMTVSFSTPFALGIFKPRTLMITSQVLFLAAGITLAVSPSHAVSLFGITLICAGFSVGFGVAMSQALGPFSLRAGVASSTLGIAQVCGSSLWIWLAAVVGIGAWNMLIGILIACSIVSLLLIMFVAPGRPVAAHEEIHHHA</sequence>
<feature type="chain" id="PRO_1000068686" description="Multidrug resistance protein MdtL">
    <location>
        <begin position="1"/>
        <end position="391"/>
    </location>
</feature>
<feature type="transmembrane region" description="Helical" evidence="1">
    <location>
        <begin position="4"/>
        <end position="24"/>
    </location>
</feature>
<feature type="transmembrane region" description="Helical" evidence="1">
    <location>
        <begin position="42"/>
        <end position="62"/>
    </location>
</feature>
<feature type="transmembrane region" description="Helical" evidence="1">
    <location>
        <begin position="69"/>
        <end position="89"/>
    </location>
</feature>
<feature type="transmembrane region" description="Helical" evidence="1">
    <location>
        <begin position="93"/>
        <end position="113"/>
    </location>
</feature>
<feature type="transmembrane region" description="Helical" evidence="1">
    <location>
        <begin position="131"/>
        <end position="151"/>
    </location>
</feature>
<feature type="transmembrane region" description="Helical" evidence="1">
    <location>
        <begin position="158"/>
        <end position="178"/>
    </location>
</feature>
<feature type="transmembrane region" description="Helical" evidence="1">
    <location>
        <begin position="203"/>
        <end position="222"/>
    </location>
</feature>
<feature type="transmembrane region" description="Helical" evidence="1">
    <location>
        <begin position="245"/>
        <end position="265"/>
    </location>
</feature>
<feature type="transmembrane region" description="Helical" evidence="1">
    <location>
        <begin position="269"/>
        <end position="289"/>
    </location>
</feature>
<feature type="transmembrane region" description="Helical" evidence="1">
    <location>
        <begin position="293"/>
        <end position="313"/>
    </location>
</feature>
<feature type="transmembrane region" description="Helical" evidence="1">
    <location>
        <begin position="331"/>
        <end position="351"/>
    </location>
</feature>
<feature type="transmembrane region" description="Helical" evidence="1">
    <location>
        <begin position="356"/>
        <end position="376"/>
    </location>
</feature>
<comment type="function">
    <text evidence="1">Confers resistance to chloramphenicol.</text>
</comment>
<comment type="subcellular location">
    <subcellularLocation>
        <location evidence="1">Cell inner membrane</location>
        <topology evidence="1">Multi-pass membrane protein</topology>
    </subcellularLocation>
</comment>
<comment type="similarity">
    <text evidence="1">Belongs to the major facilitator superfamily. DHA1 family. MdtL (TC 2.A.1.2.22) subfamily.</text>
</comment>
<proteinExistence type="inferred from homology"/>
<keyword id="KW-0046">Antibiotic resistance</keyword>
<keyword id="KW-0997">Cell inner membrane</keyword>
<keyword id="KW-1003">Cell membrane</keyword>
<keyword id="KW-0472">Membrane</keyword>
<keyword id="KW-0812">Transmembrane</keyword>
<keyword id="KW-1133">Transmembrane helix</keyword>
<keyword id="KW-0813">Transport</keyword>
<protein>
    <recommendedName>
        <fullName evidence="1">Multidrug resistance protein MdtL</fullName>
    </recommendedName>
</protein>
<evidence type="ECO:0000255" key="1">
    <source>
        <dbReference type="HAMAP-Rule" id="MF_01530"/>
    </source>
</evidence>